<keyword id="KW-0378">Hydrolase</keyword>
<keyword id="KW-0460">Magnesium</keyword>
<keyword id="KW-0479">Metal-binding</keyword>
<keyword id="KW-0546">Nucleotide metabolism</keyword>
<keyword id="KW-1185">Reference proteome</keyword>
<name>DUT_SALTY</name>
<gene>
    <name evidence="1" type="primary">dut</name>
    <name type="ordered locus">STM3731</name>
</gene>
<dbReference type="EC" id="3.6.1.23" evidence="1"/>
<dbReference type="EMBL" id="AE006468">
    <property type="protein sequence ID" value="AAL22590.1"/>
    <property type="molecule type" value="Genomic_DNA"/>
</dbReference>
<dbReference type="RefSeq" id="NP_462631.1">
    <property type="nucleotide sequence ID" value="NC_003197.2"/>
</dbReference>
<dbReference type="RefSeq" id="WP_000717792.1">
    <property type="nucleotide sequence ID" value="NC_003197.2"/>
</dbReference>
<dbReference type="SMR" id="P64008"/>
<dbReference type="STRING" id="99287.STM3731"/>
<dbReference type="PaxDb" id="99287-STM3731"/>
<dbReference type="GeneID" id="1255255"/>
<dbReference type="KEGG" id="stm:STM3731"/>
<dbReference type="PATRIC" id="fig|99287.12.peg.3947"/>
<dbReference type="HOGENOM" id="CLU_068508_1_1_6"/>
<dbReference type="OMA" id="RSGMGHK"/>
<dbReference type="PhylomeDB" id="P64008"/>
<dbReference type="BioCyc" id="SENT99287:STM3731-MONOMER"/>
<dbReference type="UniPathway" id="UPA00610">
    <property type="reaction ID" value="UER00666"/>
</dbReference>
<dbReference type="Proteomes" id="UP000001014">
    <property type="component" value="Chromosome"/>
</dbReference>
<dbReference type="GO" id="GO:0004170">
    <property type="term" value="F:dUTP diphosphatase activity"/>
    <property type="evidence" value="ECO:0000318"/>
    <property type="project" value="GO_Central"/>
</dbReference>
<dbReference type="GO" id="GO:0000287">
    <property type="term" value="F:magnesium ion binding"/>
    <property type="evidence" value="ECO:0000318"/>
    <property type="project" value="GO_Central"/>
</dbReference>
<dbReference type="GO" id="GO:0006226">
    <property type="term" value="P:dUMP biosynthetic process"/>
    <property type="evidence" value="ECO:0000318"/>
    <property type="project" value="GO_Central"/>
</dbReference>
<dbReference type="GO" id="GO:0046081">
    <property type="term" value="P:dUTP catabolic process"/>
    <property type="evidence" value="ECO:0000318"/>
    <property type="project" value="GO_Central"/>
</dbReference>
<dbReference type="CDD" id="cd07557">
    <property type="entry name" value="trimeric_dUTPase"/>
    <property type="match status" value="1"/>
</dbReference>
<dbReference type="FunFam" id="2.70.40.10:FF:000002">
    <property type="entry name" value="dUTP diphosphatase"/>
    <property type="match status" value="1"/>
</dbReference>
<dbReference type="Gene3D" id="2.70.40.10">
    <property type="match status" value="1"/>
</dbReference>
<dbReference type="HAMAP" id="MF_00116">
    <property type="entry name" value="dUTPase_bact"/>
    <property type="match status" value="1"/>
</dbReference>
<dbReference type="InterPro" id="IPR008181">
    <property type="entry name" value="dUTPase"/>
</dbReference>
<dbReference type="InterPro" id="IPR029054">
    <property type="entry name" value="dUTPase-like"/>
</dbReference>
<dbReference type="InterPro" id="IPR036157">
    <property type="entry name" value="dUTPase-like_sf"/>
</dbReference>
<dbReference type="InterPro" id="IPR033704">
    <property type="entry name" value="dUTPase_trimeric"/>
</dbReference>
<dbReference type="NCBIfam" id="TIGR00576">
    <property type="entry name" value="dut"/>
    <property type="match status" value="1"/>
</dbReference>
<dbReference type="NCBIfam" id="NF001862">
    <property type="entry name" value="PRK00601.1"/>
    <property type="match status" value="1"/>
</dbReference>
<dbReference type="PANTHER" id="PTHR11241">
    <property type="entry name" value="DEOXYURIDINE 5'-TRIPHOSPHATE NUCLEOTIDOHYDROLASE"/>
    <property type="match status" value="1"/>
</dbReference>
<dbReference type="PANTHER" id="PTHR11241:SF0">
    <property type="entry name" value="DEOXYURIDINE 5'-TRIPHOSPHATE NUCLEOTIDOHYDROLASE"/>
    <property type="match status" value="1"/>
</dbReference>
<dbReference type="Pfam" id="PF00692">
    <property type="entry name" value="dUTPase"/>
    <property type="match status" value="1"/>
</dbReference>
<dbReference type="SUPFAM" id="SSF51283">
    <property type="entry name" value="dUTPase-like"/>
    <property type="match status" value="1"/>
</dbReference>
<reference key="1">
    <citation type="journal article" date="2001" name="Nature">
        <title>Complete genome sequence of Salmonella enterica serovar Typhimurium LT2.</title>
        <authorList>
            <person name="McClelland M."/>
            <person name="Sanderson K.E."/>
            <person name="Spieth J."/>
            <person name="Clifton S.W."/>
            <person name="Latreille P."/>
            <person name="Courtney L."/>
            <person name="Porwollik S."/>
            <person name="Ali J."/>
            <person name="Dante M."/>
            <person name="Du F."/>
            <person name="Hou S."/>
            <person name="Layman D."/>
            <person name="Leonard S."/>
            <person name="Nguyen C."/>
            <person name="Scott K."/>
            <person name="Holmes A."/>
            <person name="Grewal N."/>
            <person name="Mulvaney E."/>
            <person name="Ryan E."/>
            <person name="Sun H."/>
            <person name="Florea L."/>
            <person name="Miller W."/>
            <person name="Stoneking T."/>
            <person name="Nhan M."/>
            <person name="Waterston R."/>
            <person name="Wilson R.K."/>
        </authorList>
    </citation>
    <scope>NUCLEOTIDE SEQUENCE [LARGE SCALE GENOMIC DNA]</scope>
    <source>
        <strain>LT2 / SGSC1412 / ATCC 700720</strain>
    </source>
</reference>
<proteinExistence type="inferred from homology"/>
<sequence>MKKIDVKILDPRVGQQFPLPTYATSGSAGLDLRACLDDAVELAPGATTLVPTGLAIHIADPSLAAVMLPRSGLGHKHGIVLGNLVGLIDSDYQGQLMVSIWNRGQDSFTIEPGERIAQMVFVPVVQAEFNLVEAFDATERGEGGFGHSGRK</sequence>
<protein>
    <recommendedName>
        <fullName evidence="1">Deoxyuridine 5'-triphosphate nucleotidohydrolase</fullName>
        <shortName evidence="1">dUTPase</shortName>
        <ecNumber evidence="1">3.6.1.23</ecNumber>
    </recommendedName>
    <alternativeName>
        <fullName evidence="1">dUTP pyrophosphatase</fullName>
    </alternativeName>
</protein>
<evidence type="ECO:0000255" key="1">
    <source>
        <dbReference type="HAMAP-Rule" id="MF_00116"/>
    </source>
</evidence>
<comment type="function">
    <text evidence="1">This enzyme is involved in nucleotide metabolism: it produces dUMP, the immediate precursor of thymidine nucleotides and it decreases the intracellular concentration of dUTP so that uracil cannot be incorporated into DNA.</text>
</comment>
<comment type="catalytic activity">
    <reaction evidence="1">
        <text>dUTP + H2O = dUMP + diphosphate + H(+)</text>
        <dbReference type="Rhea" id="RHEA:10248"/>
        <dbReference type="ChEBI" id="CHEBI:15377"/>
        <dbReference type="ChEBI" id="CHEBI:15378"/>
        <dbReference type="ChEBI" id="CHEBI:33019"/>
        <dbReference type="ChEBI" id="CHEBI:61555"/>
        <dbReference type="ChEBI" id="CHEBI:246422"/>
        <dbReference type="EC" id="3.6.1.23"/>
    </reaction>
</comment>
<comment type="cofactor">
    <cofactor evidence="1">
        <name>Mg(2+)</name>
        <dbReference type="ChEBI" id="CHEBI:18420"/>
    </cofactor>
</comment>
<comment type="pathway">
    <text evidence="1">Pyrimidine metabolism; dUMP biosynthesis; dUMP from dCTP (dUTP route): step 2/2.</text>
</comment>
<comment type="similarity">
    <text evidence="1">Belongs to the dUTPase family.</text>
</comment>
<feature type="chain" id="PRO_0000182905" description="Deoxyuridine 5'-triphosphate nucleotidohydrolase">
    <location>
        <begin position="1"/>
        <end position="151"/>
    </location>
</feature>
<feature type="binding site" evidence="1">
    <location>
        <begin position="70"/>
        <end position="72"/>
    </location>
    <ligand>
        <name>substrate</name>
    </ligand>
</feature>
<feature type="binding site" evidence="1">
    <location>
        <position position="83"/>
    </location>
    <ligand>
        <name>substrate</name>
    </ligand>
</feature>
<feature type="binding site" evidence="1">
    <location>
        <begin position="87"/>
        <end position="89"/>
    </location>
    <ligand>
        <name>substrate</name>
    </ligand>
</feature>
<feature type="binding site" evidence="1">
    <location>
        <position position="97"/>
    </location>
    <ligand>
        <name>substrate</name>
    </ligand>
</feature>
<organism>
    <name type="scientific">Salmonella typhimurium (strain LT2 / SGSC1412 / ATCC 700720)</name>
    <dbReference type="NCBI Taxonomy" id="99287"/>
    <lineage>
        <taxon>Bacteria</taxon>
        <taxon>Pseudomonadati</taxon>
        <taxon>Pseudomonadota</taxon>
        <taxon>Gammaproteobacteria</taxon>
        <taxon>Enterobacterales</taxon>
        <taxon>Enterobacteriaceae</taxon>
        <taxon>Salmonella</taxon>
    </lineage>
</organism>
<accession>P64008</accession>
<accession>Q8XEK2</accession>